<sequence>MNLHEYQAKQLFARYGLPAPVGYACTTPREAEEAASKIGAGPWVVKCQVHAGGRGKAGGVKVVKSKEEIRAFAENWLGKRLVTYQTDANGQPVNQILVEAATDIGKELYLGAVVDRSSRRVVFMASTEGGVEIEKVAEETPHLIHKVALDPLTGPMPYQGRELAFKLGLEGKLVQQFTKIFMGLATIFLERDLALIEINPLVITKQGDLICLDGKLGADGNALFRQPDLREMRDQSQEDPREAQAAQWELNYVALDGNIGCMVNGAGLAMGTMDIVKLHGGEPANFLDVGGGATKERVTEAFKIILSDDNVKAVLVNIFGGIVRCDLIADGIIGAVEEVGVNVPVVVRLEGNNAELGAKKLADSGLNIIAAKSLTDAAQQVVAAVEGK</sequence>
<keyword id="KW-0067">ATP-binding</keyword>
<keyword id="KW-0436">Ligase</keyword>
<keyword id="KW-0460">Magnesium</keyword>
<keyword id="KW-0479">Metal-binding</keyword>
<keyword id="KW-0547">Nucleotide-binding</keyword>
<keyword id="KW-0816">Tricarboxylic acid cycle</keyword>
<feature type="chain" id="PRO_1000129223" description="Succinate--CoA ligase [ADP-forming] subunit beta">
    <location>
        <begin position="1"/>
        <end position="388"/>
    </location>
</feature>
<feature type="domain" description="ATP-grasp" evidence="1">
    <location>
        <begin position="9"/>
        <end position="244"/>
    </location>
</feature>
<feature type="binding site" evidence="1">
    <location>
        <position position="46"/>
    </location>
    <ligand>
        <name>ATP</name>
        <dbReference type="ChEBI" id="CHEBI:30616"/>
    </ligand>
</feature>
<feature type="binding site" evidence="1">
    <location>
        <begin position="53"/>
        <end position="55"/>
    </location>
    <ligand>
        <name>ATP</name>
        <dbReference type="ChEBI" id="CHEBI:30616"/>
    </ligand>
</feature>
<feature type="binding site" evidence="1">
    <location>
        <position position="99"/>
    </location>
    <ligand>
        <name>ATP</name>
        <dbReference type="ChEBI" id="CHEBI:30616"/>
    </ligand>
</feature>
<feature type="binding site" evidence="1">
    <location>
        <position position="102"/>
    </location>
    <ligand>
        <name>ATP</name>
        <dbReference type="ChEBI" id="CHEBI:30616"/>
    </ligand>
</feature>
<feature type="binding site" evidence="1">
    <location>
        <position position="107"/>
    </location>
    <ligand>
        <name>ATP</name>
        <dbReference type="ChEBI" id="CHEBI:30616"/>
    </ligand>
</feature>
<feature type="binding site" evidence="1">
    <location>
        <position position="199"/>
    </location>
    <ligand>
        <name>Mg(2+)</name>
        <dbReference type="ChEBI" id="CHEBI:18420"/>
    </ligand>
</feature>
<feature type="binding site" evidence="1">
    <location>
        <position position="213"/>
    </location>
    <ligand>
        <name>Mg(2+)</name>
        <dbReference type="ChEBI" id="CHEBI:18420"/>
    </ligand>
</feature>
<feature type="binding site" evidence="1">
    <location>
        <position position="264"/>
    </location>
    <ligand>
        <name>substrate</name>
        <note>ligand shared with subunit alpha</note>
    </ligand>
</feature>
<feature type="binding site" evidence="1">
    <location>
        <begin position="321"/>
        <end position="323"/>
    </location>
    <ligand>
        <name>substrate</name>
        <note>ligand shared with subunit alpha</note>
    </ligand>
</feature>
<dbReference type="EC" id="6.2.1.5" evidence="1"/>
<dbReference type="EMBL" id="AM933173">
    <property type="protein sequence ID" value="CAR36617.1"/>
    <property type="molecule type" value="Genomic_DNA"/>
</dbReference>
<dbReference type="RefSeq" id="WP_001048590.1">
    <property type="nucleotide sequence ID" value="NC_011274.1"/>
</dbReference>
<dbReference type="SMR" id="B5R689"/>
<dbReference type="KEGG" id="seg:SG0721"/>
<dbReference type="HOGENOM" id="CLU_037430_4_0_6"/>
<dbReference type="UniPathway" id="UPA00223">
    <property type="reaction ID" value="UER00999"/>
</dbReference>
<dbReference type="Proteomes" id="UP000008321">
    <property type="component" value="Chromosome"/>
</dbReference>
<dbReference type="GO" id="GO:0005829">
    <property type="term" value="C:cytosol"/>
    <property type="evidence" value="ECO:0007669"/>
    <property type="project" value="TreeGrafter"/>
</dbReference>
<dbReference type="GO" id="GO:0042709">
    <property type="term" value="C:succinate-CoA ligase complex"/>
    <property type="evidence" value="ECO:0007669"/>
    <property type="project" value="TreeGrafter"/>
</dbReference>
<dbReference type="GO" id="GO:0005524">
    <property type="term" value="F:ATP binding"/>
    <property type="evidence" value="ECO:0007669"/>
    <property type="project" value="UniProtKB-UniRule"/>
</dbReference>
<dbReference type="GO" id="GO:0000287">
    <property type="term" value="F:magnesium ion binding"/>
    <property type="evidence" value="ECO:0007669"/>
    <property type="project" value="UniProtKB-UniRule"/>
</dbReference>
<dbReference type="GO" id="GO:0004775">
    <property type="term" value="F:succinate-CoA ligase (ADP-forming) activity"/>
    <property type="evidence" value="ECO:0007669"/>
    <property type="project" value="UniProtKB-UniRule"/>
</dbReference>
<dbReference type="GO" id="GO:0004776">
    <property type="term" value="F:succinate-CoA ligase (GDP-forming) activity"/>
    <property type="evidence" value="ECO:0007669"/>
    <property type="project" value="RHEA"/>
</dbReference>
<dbReference type="GO" id="GO:0006104">
    <property type="term" value="P:succinyl-CoA metabolic process"/>
    <property type="evidence" value="ECO:0007669"/>
    <property type="project" value="TreeGrafter"/>
</dbReference>
<dbReference type="GO" id="GO:0006099">
    <property type="term" value="P:tricarboxylic acid cycle"/>
    <property type="evidence" value="ECO:0007669"/>
    <property type="project" value="UniProtKB-UniRule"/>
</dbReference>
<dbReference type="FunFam" id="3.30.1490.20:FF:000002">
    <property type="entry name" value="Succinate--CoA ligase [ADP-forming] subunit beta"/>
    <property type="match status" value="1"/>
</dbReference>
<dbReference type="FunFam" id="3.30.470.20:FF:000002">
    <property type="entry name" value="Succinate--CoA ligase [ADP-forming] subunit beta"/>
    <property type="match status" value="1"/>
</dbReference>
<dbReference type="FunFam" id="3.40.50.261:FF:000001">
    <property type="entry name" value="Succinate--CoA ligase [ADP-forming] subunit beta"/>
    <property type="match status" value="1"/>
</dbReference>
<dbReference type="Gene3D" id="3.30.1490.20">
    <property type="entry name" value="ATP-grasp fold, A domain"/>
    <property type="match status" value="1"/>
</dbReference>
<dbReference type="Gene3D" id="3.30.470.20">
    <property type="entry name" value="ATP-grasp fold, B domain"/>
    <property type="match status" value="1"/>
</dbReference>
<dbReference type="Gene3D" id="3.40.50.261">
    <property type="entry name" value="Succinyl-CoA synthetase domains"/>
    <property type="match status" value="1"/>
</dbReference>
<dbReference type="HAMAP" id="MF_00558">
    <property type="entry name" value="Succ_CoA_beta"/>
    <property type="match status" value="1"/>
</dbReference>
<dbReference type="InterPro" id="IPR011761">
    <property type="entry name" value="ATP-grasp"/>
</dbReference>
<dbReference type="InterPro" id="IPR013650">
    <property type="entry name" value="ATP-grasp_succ-CoA_synth-type"/>
</dbReference>
<dbReference type="InterPro" id="IPR013815">
    <property type="entry name" value="ATP_grasp_subdomain_1"/>
</dbReference>
<dbReference type="InterPro" id="IPR017866">
    <property type="entry name" value="Succ-CoA_synthase_bsu_CS"/>
</dbReference>
<dbReference type="InterPro" id="IPR005811">
    <property type="entry name" value="SUCC_ACL_C"/>
</dbReference>
<dbReference type="InterPro" id="IPR005809">
    <property type="entry name" value="Succ_CoA_ligase-like_bsu"/>
</dbReference>
<dbReference type="InterPro" id="IPR016102">
    <property type="entry name" value="Succinyl-CoA_synth-like"/>
</dbReference>
<dbReference type="NCBIfam" id="NF001913">
    <property type="entry name" value="PRK00696.1"/>
    <property type="match status" value="1"/>
</dbReference>
<dbReference type="NCBIfam" id="TIGR01016">
    <property type="entry name" value="sucCoAbeta"/>
    <property type="match status" value="1"/>
</dbReference>
<dbReference type="PANTHER" id="PTHR11815:SF10">
    <property type="entry name" value="SUCCINATE--COA LIGASE [GDP-FORMING] SUBUNIT BETA, MITOCHONDRIAL"/>
    <property type="match status" value="1"/>
</dbReference>
<dbReference type="PANTHER" id="PTHR11815">
    <property type="entry name" value="SUCCINYL-COA SYNTHETASE BETA CHAIN"/>
    <property type="match status" value="1"/>
</dbReference>
<dbReference type="Pfam" id="PF08442">
    <property type="entry name" value="ATP-grasp_2"/>
    <property type="match status" value="1"/>
</dbReference>
<dbReference type="Pfam" id="PF00549">
    <property type="entry name" value="Ligase_CoA"/>
    <property type="match status" value="1"/>
</dbReference>
<dbReference type="PIRSF" id="PIRSF001554">
    <property type="entry name" value="SucCS_beta"/>
    <property type="match status" value="1"/>
</dbReference>
<dbReference type="SUPFAM" id="SSF56059">
    <property type="entry name" value="Glutathione synthetase ATP-binding domain-like"/>
    <property type="match status" value="1"/>
</dbReference>
<dbReference type="SUPFAM" id="SSF52210">
    <property type="entry name" value="Succinyl-CoA synthetase domains"/>
    <property type="match status" value="1"/>
</dbReference>
<dbReference type="PROSITE" id="PS50975">
    <property type="entry name" value="ATP_GRASP"/>
    <property type="match status" value="1"/>
</dbReference>
<dbReference type="PROSITE" id="PS01217">
    <property type="entry name" value="SUCCINYL_COA_LIG_3"/>
    <property type="match status" value="1"/>
</dbReference>
<proteinExistence type="inferred from homology"/>
<organism>
    <name type="scientific">Salmonella gallinarum (strain 287/91 / NCTC 13346)</name>
    <dbReference type="NCBI Taxonomy" id="550538"/>
    <lineage>
        <taxon>Bacteria</taxon>
        <taxon>Pseudomonadati</taxon>
        <taxon>Pseudomonadota</taxon>
        <taxon>Gammaproteobacteria</taxon>
        <taxon>Enterobacterales</taxon>
        <taxon>Enterobacteriaceae</taxon>
        <taxon>Salmonella</taxon>
    </lineage>
</organism>
<accession>B5R689</accession>
<evidence type="ECO:0000255" key="1">
    <source>
        <dbReference type="HAMAP-Rule" id="MF_00558"/>
    </source>
</evidence>
<comment type="function">
    <text evidence="1">Succinyl-CoA synthetase functions in the citric acid cycle (TCA), coupling the hydrolysis of succinyl-CoA to the synthesis of either ATP or GTP and thus represents the only step of substrate-level phosphorylation in the TCA. The beta subunit provides nucleotide specificity of the enzyme and binds the substrate succinate, while the binding sites for coenzyme A and phosphate are found in the alpha subunit.</text>
</comment>
<comment type="catalytic activity">
    <reaction evidence="1">
        <text>succinate + ATP + CoA = succinyl-CoA + ADP + phosphate</text>
        <dbReference type="Rhea" id="RHEA:17661"/>
        <dbReference type="ChEBI" id="CHEBI:30031"/>
        <dbReference type="ChEBI" id="CHEBI:30616"/>
        <dbReference type="ChEBI" id="CHEBI:43474"/>
        <dbReference type="ChEBI" id="CHEBI:57287"/>
        <dbReference type="ChEBI" id="CHEBI:57292"/>
        <dbReference type="ChEBI" id="CHEBI:456216"/>
        <dbReference type="EC" id="6.2.1.5"/>
    </reaction>
    <physiologicalReaction direction="right-to-left" evidence="1">
        <dbReference type="Rhea" id="RHEA:17663"/>
    </physiologicalReaction>
</comment>
<comment type="catalytic activity">
    <reaction evidence="1">
        <text>GTP + succinate + CoA = succinyl-CoA + GDP + phosphate</text>
        <dbReference type="Rhea" id="RHEA:22120"/>
        <dbReference type="ChEBI" id="CHEBI:30031"/>
        <dbReference type="ChEBI" id="CHEBI:37565"/>
        <dbReference type="ChEBI" id="CHEBI:43474"/>
        <dbReference type="ChEBI" id="CHEBI:57287"/>
        <dbReference type="ChEBI" id="CHEBI:57292"/>
        <dbReference type="ChEBI" id="CHEBI:58189"/>
    </reaction>
    <physiologicalReaction direction="right-to-left" evidence="1">
        <dbReference type="Rhea" id="RHEA:22122"/>
    </physiologicalReaction>
</comment>
<comment type="cofactor">
    <cofactor evidence="1">
        <name>Mg(2+)</name>
        <dbReference type="ChEBI" id="CHEBI:18420"/>
    </cofactor>
    <text evidence="1">Binds 1 Mg(2+) ion per subunit.</text>
</comment>
<comment type="pathway">
    <text evidence="1">Carbohydrate metabolism; tricarboxylic acid cycle; succinate from succinyl-CoA (ligase route): step 1/1.</text>
</comment>
<comment type="subunit">
    <text evidence="1">Heterotetramer of two alpha and two beta subunits.</text>
</comment>
<comment type="similarity">
    <text evidence="1">Belongs to the succinate/malate CoA ligase beta subunit family.</text>
</comment>
<gene>
    <name evidence="1" type="primary">sucC</name>
    <name type="ordered locus">SG0721</name>
</gene>
<reference key="1">
    <citation type="journal article" date="2008" name="Genome Res.">
        <title>Comparative genome analysis of Salmonella enteritidis PT4 and Salmonella gallinarum 287/91 provides insights into evolutionary and host adaptation pathways.</title>
        <authorList>
            <person name="Thomson N.R."/>
            <person name="Clayton D.J."/>
            <person name="Windhorst D."/>
            <person name="Vernikos G."/>
            <person name="Davidson S."/>
            <person name="Churcher C."/>
            <person name="Quail M.A."/>
            <person name="Stevens M."/>
            <person name="Jones M.A."/>
            <person name="Watson M."/>
            <person name="Barron A."/>
            <person name="Layton A."/>
            <person name="Pickard D."/>
            <person name="Kingsley R.A."/>
            <person name="Bignell A."/>
            <person name="Clark L."/>
            <person name="Harris B."/>
            <person name="Ormond D."/>
            <person name="Abdellah Z."/>
            <person name="Brooks K."/>
            <person name="Cherevach I."/>
            <person name="Chillingworth T."/>
            <person name="Woodward J."/>
            <person name="Norberczak H."/>
            <person name="Lord A."/>
            <person name="Arrowsmith C."/>
            <person name="Jagels K."/>
            <person name="Moule S."/>
            <person name="Mungall K."/>
            <person name="Saunders M."/>
            <person name="Whitehead S."/>
            <person name="Chabalgoity J.A."/>
            <person name="Maskell D."/>
            <person name="Humphreys T."/>
            <person name="Roberts M."/>
            <person name="Barrow P.A."/>
            <person name="Dougan G."/>
            <person name="Parkhill J."/>
        </authorList>
    </citation>
    <scope>NUCLEOTIDE SEQUENCE [LARGE SCALE GENOMIC DNA]</scope>
    <source>
        <strain>287/91 / NCTC 13346</strain>
    </source>
</reference>
<name>SUCC_SALG2</name>
<protein>
    <recommendedName>
        <fullName evidence="1">Succinate--CoA ligase [ADP-forming] subunit beta</fullName>
        <ecNumber evidence="1">6.2.1.5</ecNumber>
    </recommendedName>
    <alternativeName>
        <fullName evidence="1">Succinyl-CoA synthetase subunit beta</fullName>
        <shortName evidence="1">SCS-beta</shortName>
    </alternativeName>
</protein>